<evidence type="ECO:0000255" key="1">
    <source>
        <dbReference type="HAMAP-Rule" id="MF_00218"/>
    </source>
</evidence>
<evidence type="ECO:0000305" key="2"/>
<gene>
    <name evidence="1" type="primary">hemE</name>
    <name type="ordered locus">b3997</name>
    <name type="ordered locus">JW3961</name>
</gene>
<organism>
    <name type="scientific">Escherichia coli (strain K12)</name>
    <dbReference type="NCBI Taxonomy" id="83333"/>
    <lineage>
        <taxon>Bacteria</taxon>
        <taxon>Pseudomonadati</taxon>
        <taxon>Pseudomonadota</taxon>
        <taxon>Gammaproteobacteria</taxon>
        <taxon>Enterobacterales</taxon>
        <taxon>Enterobacteriaceae</taxon>
        <taxon>Escherichia</taxon>
    </lineage>
</organism>
<comment type="function">
    <text evidence="1">Catalyzes the decarboxylation of four acetate groups of uroporphyrinogen-III to yield coproporphyrinogen-III.</text>
</comment>
<comment type="catalytic activity">
    <reaction evidence="1">
        <text>uroporphyrinogen III + 4 H(+) = coproporphyrinogen III + 4 CO2</text>
        <dbReference type="Rhea" id="RHEA:19865"/>
        <dbReference type="ChEBI" id="CHEBI:15378"/>
        <dbReference type="ChEBI" id="CHEBI:16526"/>
        <dbReference type="ChEBI" id="CHEBI:57308"/>
        <dbReference type="ChEBI" id="CHEBI:57309"/>
        <dbReference type="EC" id="4.1.1.37"/>
    </reaction>
</comment>
<comment type="pathway">
    <text evidence="1">Porphyrin-containing compound metabolism; protoporphyrin-IX biosynthesis; coproporphyrinogen-III from 5-aminolevulinate: step 4/4.</text>
</comment>
<comment type="subunit">
    <text evidence="1">Homodimer.</text>
</comment>
<comment type="subcellular location">
    <subcellularLocation>
        <location evidence="1">Cytoplasm</location>
    </subcellularLocation>
</comment>
<comment type="similarity">
    <text evidence="1">Belongs to the uroporphyrinogen decarboxylase family.</text>
</comment>
<sequence>MTELKNDRYLRALLRQPVDVTPVWMMRQAGRYLPEYKATRAQAGDFMSLCKNAELACEVTLQPLRRYPLDAAILFSDILTVPDAMGLGLYFEAGEGPRFTSPVTCKADVDKLPIPDPEDELGYVMNAVRTIRRELKGEVPLIGFSGSPWTLATYMVEGGSSKAFTVIKKMMYADPQALHALLDKLAKSVTLYLNAQIKAGAQAVMIFDTWGGVLTGRDYQQFSLYYMHKIVDGLLRENDGRRVPVTLFTKGGGQWLEAMAETGCDALGLDWTTDIADARRRVGNKVALQGNMDPSMLYAPPARIEEEVATILAGFGHGEGHVFNLGHGIHQDVPPEHAGVFVEAVHRLSEQYHR</sequence>
<protein>
    <recommendedName>
        <fullName evidence="1">Uroporphyrinogen decarboxylase</fullName>
        <shortName evidence="1">UPD</shortName>
        <shortName evidence="1">URO-D</shortName>
        <ecNumber evidence="1">4.1.1.37</ecNumber>
    </recommendedName>
</protein>
<reference key="1">
    <citation type="journal article" date="1993" name="Gene">
        <title>Cloning and sequencing of the hemE gene encoding uroporphyrinogen III decarboxylase (UPD) from Escherichia coli K-12.</title>
        <authorList>
            <person name="Nishimura K."/>
            <person name="Inokuchi H."/>
        </authorList>
    </citation>
    <scope>NUCLEOTIDE SEQUENCE [GENOMIC DNA]</scope>
    <source>
        <strain>K12</strain>
    </source>
</reference>
<reference key="2">
    <citation type="journal article" date="1993" name="Nucleic Acids Res.">
        <title>Analysis of the Escherichia coli genome. IV. DNA sequence of the region from 89.2 to 92.8 minutes.</title>
        <authorList>
            <person name="Blattner F.R."/>
            <person name="Burland V.D."/>
            <person name="Plunkett G. III"/>
            <person name="Sofia H.J."/>
            <person name="Daniels D.L."/>
        </authorList>
    </citation>
    <scope>NUCLEOTIDE SEQUENCE [LARGE SCALE GENOMIC DNA]</scope>
    <source>
        <strain>K12 / MG1655 / ATCC 47076</strain>
    </source>
</reference>
<reference key="3">
    <citation type="journal article" date="1997" name="Science">
        <title>The complete genome sequence of Escherichia coli K-12.</title>
        <authorList>
            <person name="Blattner F.R."/>
            <person name="Plunkett G. III"/>
            <person name="Bloch C.A."/>
            <person name="Perna N.T."/>
            <person name="Burland V."/>
            <person name="Riley M."/>
            <person name="Collado-Vides J."/>
            <person name="Glasner J.D."/>
            <person name="Rode C.K."/>
            <person name="Mayhew G.F."/>
            <person name="Gregor J."/>
            <person name="Davis N.W."/>
            <person name="Kirkpatrick H.A."/>
            <person name="Goeden M.A."/>
            <person name="Rose D.J."/>
            <person name="Mau B."/>
            <person name="Shao Y."/>
        </authorList>
    </citation>
    <scope>NUCLEOTIDE SEQUENCE [LARGE SCALE GENOMIC DNA]</scope>
    <source>
        <strain>K12 / MG1655 / ATCC 47076</strain>
    </source>
</reference>
<reference key="4">
    <citation type="journal article" date="2006" name="Mol. Syst. Biol.">
        <title>Highly accurate genome sequences of Escherichia coli K-12 strains MG1655 and W3110.</title>
        <authorList>
            <person name="Hayashi K."/>
            <person name="Morooka N."/>
            <person name="Yamamoto Y."/>
            <person name="Fujita K."/>
            <person name="Isono K."/>
            <person name="Choi S."/>
            <person name="Ohtsubo E."/>
            <person name="Baba T."/>
            <person name="Wanner B.L."/>
            <person name="Mori H."/>
            <person name="Horiuchi T."/>
        </authorList>
    </citation>
    <scope>NUCLEOTIDE SEQUENCE [LARGE SCALE GENOMIC DNA]</scope>
    <source>
        <strain>K12 / W3110 / ATCC 27325 / DSM 5911</strain>
    </source>
</reference>
<feature type="chain" id="PRO_0000187603" description="Uroporphyrinogen decarboxylase">
    <location>
        <begin position="1"/>
        <end position="354"/>
    </location>
</feature>
<feature type="binding site" evidence="1">
    <location>
        <begin position="27"/>
        <end position="31"/>
    </location>
    <ligand>
        <name>substrate</name>
    </ligand>
</feature>
<feature type="binding site" evidence="1">
    <location>
        <position position="46"/>
    </location>
    <ligand>
        <name>substrate</name>
    </ligand>
</feature>
<feature type="binding site" evidence="1">
    <location>
        <position position="77"/>
    </location>
    <ligand>
        <name>substrate</name>
    </ligand>
</feature>
<feature type="binding site" evidence="1">
    <location>
        <position position="154"/>
    </location>
    <ligand>
        <name>substrate</name>
    </ligand>
</feature>
<feature type="binding site" evidence="1">
    <location>
        <position position="209"/>
    </location>
    <ligand>
        <name>substrate</name>
    </ligand>
</feature>
<feature type="binding site" evidence="1">
    <location>
        <position position="327"/>
    </location>
    <ligand>
        <name>substrate</name>
    </ligand>
</feature>
<feature type="site" description="Transition state stabilizer" evidence="1">
    <location>
        <position position="77"/>
    </location>
</feature>
<feature type="sequence conflict" description="In Ref. 1; BAA02148." evidence="2" ref="1">
    <original>AILFSDI</original>
    <variation>RSSFRY</variation>
    <location>
        <begin position="72"/>
        <end position="78"/>
    </location>
</feature>
<feature type="sequence conflict" description="In Ref. 1; BAA02148." evidence="2" ref="1">
    <original>D</original>
    <variation>I</variation>
    <location>
        <position position="83"/>
    </location>
</feature>
<feature type="sequence conflict" description="In Ref. 1; BAA02148." evidence="2" ref="1">
    <original>LYFEAGEGPRFTSPV</original>
    <variation>SSILKPEKVRVLPRQI</variation>
    <location>
        <begin position="89"/>
        <end position="103"/>
    </location>
</feature>
<feature type="sequence conflict" description="In Ref. 1; BAA02148." evidence="2" ref="1">
    <original>GGGQWL</original>
    <variation>SATVA</variation>
    <location>
        <begin position="251"/>
        <end position="256"/>
    </location>
</feature>
<dbReference type="EC" id="4.1.1.37" evidence="1"/>
<dbReference type="EMBL" id="D12624">
    <property type="protein sequence ID" value="BAA02148.1"/>
    <property type="molecule type" value="Genomic_DNA"/>
</dbReference>
<dbReference type="EMBL" id="U00006">
    <property type="protein sequence ID" value="AAC43095.1"/>
    <property type="molecule type" value="Genomic_DNA"/>
</dbReference>
<dbReference type="EMBL" id="U00096">
    <property type="protein sequence ID" value="AAC76971.1"/>
    <property type="molecule type" value="Genomic_DNA"/>
</dbReference>
<dbReference type="EMBL" id="AP009048">
    <property type="protein sequence ID" value="BAE77322.1"/>
    <property type="molecule type" value="Genomic_DNA"/>
</dbReference>
<dbReference type="PIR" id="H65206">
    <property type="entry name" value="H65206"/>
</dbReference>
<dbReference type="RefSeq" id="NP_418425.1">
    <property type="nucleotide sequence ID" value="NC_000913.3"/>
</dbReference>
<dbReference type="RefSeq" id="WP_000137657.1">
    <property type="nucleotide sequence ID" value="NZ_SSZK01000047.1"/>
</dbReference>
<dbReference type="SMR" id="P29680"/>
<dbReference type="BioGRID" id="4263218">
    <property type="interactions" value="7"/>
</dbReference>
<dbReference type="FunCoup" id="P29680">
    <property type="interactions" value="827"/>
</dbReference>
<dbReference type="IntAct" id="P29680">
    <property type="interactions" value="5"/>
</dbReference>
<dbReference type="STRING" id="511145.b3997"/>
<dbReference type="jPOST" id="P29680"/>
<dbReference type="PaxDb" id="511145-b3997"/>
<dbReference type="EnsemblBacteria" id="AAC76971">
    <property type="protein sequence ID" value="AAC76971"/>
    <property type="gene ID" value="b3997"/>
</dbReference>
<dbReference type="GeneID" id="93777897"/>
<dbReference type="GeneID" id="948497"/>
<dbReference type="KEGG" id="ecj:JW3961"/>
<dbReference type="KEGG" id="eco:b3997"/>
<dbReference type="KEGG" id="ecoc:C3026_21590"/>
<dbReference type="PATRIC" id="fig|1411691.4.peg.2714"/>
<dbReference type="EchoBASE" id="EB1505"/>
<dbReference type="eggNOG" id="COG0407">
    <property type="taxonomic scope" value="Bacteria"/>
</dbReference>
<dbReference type="HOGENOM" id="CLU_040933_0_0_6"/>
<dbReference type="InParanoid" id="P29680"/>
<dbReference type="OMA" id="LWLMRQA"/>
<dbReference type="OrthoDB" id="9806656at2"/>
<dbReference type="PhylomeDB" id="P29680"/>
<dbReference type="BioCyc" id="EcoCyc:UROGENDECARBOX-MONOMER"/>
<dbReference type="BioCyc" id="MetaCyc:UROGENDECARBOX-MONOMER"/>
<dbReference type="UniPathway" id="UPA00251">
    <property type="reaction ID" value="UER00321"/>
</dbReference>
<dbReference type="PRO" id="PR:P29680"/>
<dbReference type="Proteomes" id="UP000000625">
    <property type="component" value="Chromosome"/>
</dbReference>
<dbReference type="GO" id="GO:0005829">
    <property type="term" value="C:cytosol"/>
    <property type="evidence" value="ECO:0000314"/>
    <property type="project" value="EcoCyc"/>
</dbReference>
<dbReference type="GO" id="GO:0004853">
    <property type="term" value="F:uroporphyrinogen decarboxylase activity"/>
    <property type="evidence" value="ECO:0000315"/>
    <property type="project" value="EcoCyc"/>
</dbReference>
<dbReference type="GO" id="GO:0006785">
    <property type="term" value="P:heme B biosynthetic process"/>
    <property type="evidence" value="ECO:0000315"/>
    <property type="project" value="EcoCyc"/>
</dbReference>
<dbReference type="GO" id="GO:0006783">
    <property type="term" value="P:heme biosynthetic process"/>
    <property type="evidence" value="ECO:0000315"/>
    <property type="project" value="EcoliWiki"/>
</dbReference>
<dbReference type="GO" id="GO:0006779">
    <property type="term" value="P:porphyrin-containing compound biosynthetic process"/>
    <property type="evidence" value="ECO:0000315"/>
    <property type="project" value="EcoliWiki"/>
</dbReference>
<dbReference type="GO" id="GO:0019353">
    <property type="term" value="P:protoporphyrinogen IX biosynthetic process from glutamate"/>
    <property type="evidence" value="ECO:0000315"/>
    <property type="project" value="EcoCyc"/>
</dbReference>
<dbReference type="GO" id="GO:0006780">
    <property type="term" value="P:uroporphyrinogen III biosynthetic process"/>
    <property type="evidence" value="ECO:0000315"/>
    <property type="project" value="EcoliWiki"/>
</dbReference>
<dbReference type="CDD" id="cd00717">
    <property type="entry name" value="URO-D"/>
    <property type="match status" value="1"/>
</dbReference>
<dbReference type="FunFam" id="3.20.20.210:FF:000001">
    <property type="entry name" value="Uroporphyrinogen decarboxylase"/>
    <property type="match status" value="1"/>
</dbReference>
<dbReference type="Gene3D" id="3.20.20.210">
    <property type="match status" value="1"/>
</dbReference>
<dbReference type="HAMAP" id="MF_00218">
    <property type="entry name" value="URO_D"/>
    <property type="match status" value="1"/>
</dbReference>
<dbReference type="InterPro" id="IPR038071">
    <property type="entry name" value="UROD/MetE-like_sf"/>
</dbReference>
<dbReference type="InterPro" id="IPR006361">
    <property type="entry name" value="Uroporphyrinogen_deCO2ase_HemE"/>
</dbReference>
<dbReference type="InterPro" id="IPR000257">
    <property type="entry name" value="Uroporphyrinogen_deCOase"/>
</dbReference>
<dbReference type="NCBIfam" id="TIGR01464">
    <property type="entry name" value="hemE"/>
    <property type="match status" value="1"/>
</dbReference>
<dbReference type="PANTHER" id="PTHR21091">
    <property type="entry name" value="METHYLTETRAHYDROFOLATE:HOMOCYSTEINE METHYLTRANSFERASE RELATED"/>
    <property type="match status" value="1"/>
</dbReference>
<dbReference type="PANTHER" id="PTHR21091:SF169">
    <property type="entry name" value="UROPORPHYRINOGEN DECARBOXYLASE"/>
    <property type="match status" value="1"/>
</dbReference>
<dbReference type="Pfam" id="PF01208">
    <property type="entry name" value="URO-D"/>
    <property type="match status" value="1"/>
</dbReference>
<dbReference type="SUPFAM" id="SSF51726">
    <property type="entry name" value="UROD/MetE-like"/>
    <property type="match status" value="1"/>
</dbReference>
<dbReference type="PROSITE" id="PS00906">
    <property type="entry name" value="UROD_1"/>
    <property type="match status" value="1"/>
</dbReference>
<dbReference type="PROSITE" id="PS00907">
    <property type="entry name" value="UROD_2"/>
    <property type="match status" value="1"/>
</dbReference>
<proteinExistence type="inferred from homology"/>
<keyword id="KW-0963">Cytoplasm</keyword>
<keyword id="KW-0210">Decarboxylase</keyword>
<keyword id="KW-0456">Lyase</keyword>
<keyword id="KW-0627">Porphyrin biosynthesis</keyword>
<keyword id="KW-1185">Reference proteome</keyword>
<accession>P29680</accession>
<accession>P78135</accession>
<accession>Q2M8T4</accession>
<name>DCUP_ECOLI</name>